<dbReference type="EC" id="2.1.1.166" evidence="1"/>
<dbReference type="EMBL" id="AE003849">
    <property type="protein sequence ID" value="AAF82907.1"/>
    <property type="molecule type" value="Genomic_DNA"/>
</dbReference>
<dbReference type="PIR" id="D82849">
    <property type="entry name" value="D82849"/>
</dbReference>
<dbReference type="RefSeq" id="WP_004085554.1">
    <property type="nucleotide sequence ID" value="NC_002488.3"/>
</dbReference>
<dbReference type="SMR" id="Q9PH52"/>
<dbReference type="STRING" id="160492.XF_0094"/>
<dbReference type="KEGG" id="xfa:XF_0094"/>
<dbReference type="eggNOG" id="COG0293">
    <property type="taxonomic scope" value="Bacteria"/>
</dbReference>
<dbReference type="HOGENOM" id="CLU_009422_4_0_6"/>
<dbReference type="Proteomes" id="UP000000812">
    <property type="component" value="Chromosome"/>
</dbReference>
<dbReference type="GO" id="GO:0005737">
    <property type="term" value="C:cytoplasm"/>
    <property type="evidence" value="ECO:0007669"/>
    <property type="project" value="UniProtKB-SubCell"/>
</dbReference>
<dbReference type="GO" id="GO:0008650">
    <property type="term" value="F:rRNA (uridine-2'-O-)-methyltransferase activity"/>
    <property type="evidence" value="ECO:0007669"/>
    <property type="project" value="UniProtKB-UniRule"/>
</dbReference>
<dbReference type="FunFam" id="3.40.50.150:FF:000005">
    <property type="entry name" value="Ribosomal RNA large subunit methyltransferase E"/>
    <property type="match status" value="1"/>
</dbReference>
<dbReference type="Gene3D" id="3.40.50.150">
    <property type="entry name" value="Vaccinia Virus protein VP39"/>
    <property type="match status" value="1"/>
</dbReference>
<dbReference type="HAMAP" id="MF_01547">
    <property type="entry name" value="RNA_methyltr_E"/>
    <property type="match status" value="1"/>
</dbReference>
<dbReference type="InterPro" id="IPR050082">
    <property type="entry name" value="RNA_methyltr_RlmE"/>
</dbReference>
<dbReference type="InterPro" id="IPR002877">
    <property type="entry name" value="RNA_MeTrfase_FtsJ_dom"/>
</dbReference>
<dbReference type="InterPro" id="IPR015507">
    <property type="entry name" value="rRNA-MeTfrase_E"/>
</dbReference>
<dbReference type="InterPro" id="IPR029063">
    <property type="entry name" value="SAM-dependent_MTases_sf"/>
</dbReference>
<dbReference type="NCBIfam" id="NF008390">
    <property type="entry name" value="PRK11188.1"/>
    <property type="match status" value="1"/>
</dbReference>
<dbReference type="PANTHER" id="PTHR10920">
    <property type="entry name" value="RIBOSOMAL RNA METHYLTRANSFERASE"/>
    <property type="match status" value="1"/>
</dbReference>
<dbReference type="PANTHER" id="PTHR10920:SF18">
    <property type="entry name" value="RRNA METHYLTRANSFERASE 2, MITOCHONDRIAL"/>
    <property type="match status" value="1"/>
</dbReference>
<dbReference type="Pfam" id="PF01728">
    <property type="entry name" value="FtsJ"/>
    <property type="match status" value="1"/>
</dbReference>
<dbReference type="PIRSF" id="PIRSF005461">
    <property type="entry name" value="23S_rRNA_mtase"/>
    <property type="match status" value="1"/>
</dbReference>
<dbReference type="SUPFAM" id="SSF53335">
    <property type="entry name" value="S-adenosyl-L-methionine-dependent methyltransferases"/>
    <property type="match status" value="1"/>
</dbReference>
<feature type="chain" id="PRO_0000155558" description="Ribosomal RNA large subunit methyltransferase E">
    <location>
        <begin position="1"/>
        <end position="213"/>
    </location>
</feature>
<feature type="active site" description="Proton acceptor" evidence="1">
    <location>
        <position position="161"/>
    </location>
</feature>
<feature type="binding site" evidence="1">
    <location>
        <position position="60"/>
    </location>
    <ligand>
        <name>S-adenosyl-L-methionine</name>
        <dbReference type="ChEBI" id="CHEBI:59789"/>
    </ligand>
</feature>
<feature type="binding site" evidence="1">
    <location>
        <position position="62"/>
    </location>
    <ligand>
        <name>S-adenosyl-L-methionine</name>
        <dbReference type="ChEBI" id="CHEBI:59789"/>
    </ligand>
</feature>
<feature type="binding site" evidence="1">
    <location>
        <position position="80"/>
    </location>
    <ligand>
        <name>S-adenosyl-L-methionine</name>
        <dbReference type="ChEBI" id="CHEBI:59789"/>
    </ligand>
</feature>
<feature type="binding site" evidence="1">
    <location>
        <position position="96"/>
    </location>
    <ligand>
        <name>S-adenosyl-L-methionine</name>
        <dbReference type="ChEBI" id="CHEBI:59789"/>
    </ligand>
</feature>
<feature type="binding site" evidence="1">
    <location>
        <position position="121"/>
    </location>
    <ligand>
        <name>S-adenosyl-L-methionine</name>
        <dbReference type="ChEBI" id="CHEBI:59789"/>
    </ligand>
</feature>
<reference key="1">
    <citation type="journal article" date="2000" name="Nature">
        <title>The genome sequence of the plant pathogen Xylella fastidiosa.</title>
        <authorList>
            <person name="Simpson A.J.G."/>
            <person name="Reinach F.C."/>
            <person name="Arruda P."/>
            <person name="Abreu F.A."/>
            <person name="Acencio M."/>
            <person name="Alvarenga R."/>
            <person name="Alves L.M.C."/>
            <person name="Araya J.E."/>
            <person name="Baia G.S."/>
            <person name="Baptista C.S."/>
            <person name="Barros M.H."/>
            <person name="Bonaccorsi E.D."/>
            <person name="Bordin S."/>
            <person name="Bove J.M."/>
            <person name="Briones M.R.S."/>
            <person name="Bueno M.R.P."/>
            <person name="Camargo A.A."/>
            <person name="Camargo L.E.A."/>
            <person name="Carraro D.M."/>
            <person name="Carrer H."/>
            <person name="Colauto N.B."/>
            <person name="Colombo C."/>
            <person name="Costa F.F."/>
            <person name="Costa M.C.R."/>
            <person name="Costa-Neto C.M."/>
            <person name="Coutinho L.L."/>
            <person name="Cristofani M."/>
            <person name="Dias-Neto E."/>
            <person name="Docena C."/>
            <person name="El-Dorry H."/>
            <person name="Facincani A.P."/>
            <person name="Ferreira A.J.S."/>
            <person name="Ferreira V.C.A."/>
            <person name="Ferro J.A."/>
            <person name="Fraga J.S."/>
            <person name="Franca S.C."/>
            <person name="Franco M.C."/>
            <person name="Frohme M."/>
            <person name="Furlan L.R."/>
            <person name="Garnier M."/>
            <person name="Goldman G.H."/>
            <person name="Goldman M.H.S."/>
            <person name="Gomes S.L."/>
            <person name="Gruber A."/>
            <person name="Ho P.L."/>
            <person name="Hoheisel J.D."/>
            <person name="Junqueira M.L."/>
            <person name="Kemper E.L."/>
            <person name="Kitajima J.P."/>
            <person name="Krieger J.E."/>
            <person name="Kuramae E.E."/>
            <person name="Laigret F."/>
            <person name="Lambais M.R."/>
            <person name="Leite L.C.C."/>
            <person name="Lemos E.G.M."/>
            <person name="Lemos M.V.F."/>
            <person name="Lopes S.A."/>
            <person name="Lopes C.R."/>
            <person name="Machado J.A."/>
            <person name="Machado M.A."/>
            <person name="Madeira A.M.B.N."/>
            <person name="Madeira H.M.F."/>
            <person name="Marino C.L."/>
            <person name="Marques M.V."/>
            <person name="Martins E.A.L."/>
            <person name="Martins E.M.F."/>
            <person name="Matsukuma A.Y."/>
            <person name="Menck C.F.M."/>
            <person name="Miracca E.C."/>
            <person name="Miyaki C.Y."/>
            <person name="Monteiro-Vitorello C.B."/>
            <person name="Moon D.H."/>
            <person name="Nagai M.A."/>
            <person name="Nascimento A.L.T.O."/>
            <person name="Netto L.E.S."/>
            <person name="Nhani A. Jr."/>
            <person name="Nobrega F.G."/>
            <person name="Nunes L.R."/>
            <person name="Oliveira M.A."/>
            <person name="de Oliveira M.C."/>
            <person name="de Oliveira R.C."/>
            <person name="Palmieri D.A."/>
            <person name="Paris A."/>
            <person name="Peixoto B.R."/>
            <person name="Pereira G.A.G."/>
            <person name="Pereira H.A. Jr."/>
            <person name="Pesquero J.B."/>
            <person name="Quaggio R.B."/>
            <person name="Roberto P.G."/>
            <person name="Rodrigues V."/>
            <person name="de Rosa A.J.M."/>
            <person name="de Rosa V.E. Jr."/>
            <person name="de Sa R.G."/>
            <person name="Santelli R.V."/>
            <person name="Sawasaki H.E."/>
            <person name="da Silva A.C.R."/>
            <person name="da Silva A.M."/>
            <person name="da Silva F.R."/>
            <person name="Silva W.A. Jr."/>
            <person name="da Silveira J.F."/>
            <person name="Silvestri M.L.Z."/>
            <person name="Siqueira W.J."/>
            <person name="de Souza A.A."/>
            <person name="de Souza A.P."/>
            <person name="Terenzi M.F."/>
            <person name="Truffi D."/>
            <person name="Tsai S.M."/>
            <person name="Tsuhako M.H."/>
            <person name="Vallada H."/>
            <person name="Van Sluys M.A."/>
            <person name="Verjovski-Almeida S."/>
            <person name="Vettore A.L."/>
            <person name="Zago M.A."/>
            <person name="Zatz M."/>
            <person name="Meidanis J."/>
            <person name="Setubal J.C."/>
        </authorList>
    </citation>
    <scope>NUCLEOTIDE SEQUENCE [LARGE SCALE GENOMIC DNA]</scope>
    <source>
        <strain>9a5c</strain>
    </source>
</reference>
<name>RLME_XYLFA</name>
<comment type="function">
    <text evidence="1">Specifically methylates the uridine in position 2552 of 23S rRNA at the 2'-O position of the ribose in the fully assembled 50S ribosomal subunit.</text>
</comment>
<comment type="catalytic activity">
    <reaction evidence="1">
        <text>uridine(2552) in 23S rRNA + S-adenosyl-L-methionine = 2'-O-methyluridine(2552) in 23S rRNA + S-adenosyl-L-homocysteine + H(+)</text>
        <dbReference type="Rhea" id="RHEA:42720"/>
        <dbReference type="Rhea" id="RHEA-COMP:10202"/>
        <dbReference type="Rhea" id="RHEA-COMP:10203"/>
        <dbReference type="ChEBI" id="CHEBI:15378"/>
        <dbReference type="ChEBI" id="CHEBI:57856"/>
        <dbReference type="ChEBI" id="CHEBI:59789"/>
        <dbReference type="ChEBI" id="CHEBI:65315"/>
        <dbReference type="ChEBI" id="CHEBI:74478"/>
        <dbReference type="EC" id="2.1.1.166"/>
    </reaction>
</comment>
<comment type="subcellular location">
    <subcellularLocation>
        <location evidence="1">Cytoplasm</location>
    </subcellularLocation>
</comment>
<comment type="similarity">
    <text evidence="1">Belongs to the class I-like SAM-binding methyltransferase superfamily. RNA methyltransferase RlmE family.</text>
</comment>
<evidence type="ECO:0000255" key="1">
    <source>
        <dbReference type="HAMAP-Rule" id="MF_01547"/>
    </source>
</evidence>
<proteinExistence type="inferred from homology"/>
<gene>
    <name evidence="1" type="primary">rlmE</name>
    <name evidence="1" type="synonym">ftsJ</name>
    <name evidence="1" type="synonym">rrmJ</name>
    <name type="ordered locus">XF_0094</name>
</gene>
<sequence length="213" mass="24068">MSHSKSSQRWLKEHFSDPFVKKAQAEGMRSRAAYKLEEILKRDRILRPNMVVIDLGAAPGGWSQQIRKQMGDRGRVIALDIVKMAPLVGIEFLQGDFRDKAVLSQLEIMLKGQPVDLVLSDMAPNKSGMDAMDQPRMMYLAELAMDFADIHVKPGGSFLIKLFHGVGSDDYIRQLRHRYKKVAIRKPLASRKRSPEVYILGDGKLTQNEVSCS</sequence>
<organism>
    <name type="scientific">Xylella fastidiosa (strain 9a5c)</name>
    <dbReference type="NCBI Taxonomy" id="160492"/>
    <lineage>
        <taxon>Bacteria</taxon>
        <taxon>Pseudomonadati</taxon>
        <taxon>Pseudomonadota</taxon>
        <taxon>Gammaproteobacteria</taxon>
        <taxon>Lysobacterales</taxon>
        <taxon>Lysobacteraceae</taxon>
        <taxon>Xylella</taxon>
    </lineage>
</organism>
<protein>
    <recommendedName>
        <fullName evidence="1">Ribosomal RNA large subunit methyltransferase E</fullName>
        <ecNumber evidence="1">2.1.1.166</ecNumber>
    </recommendedName>
    <alternativeName>
        <fullName evidence="1">23S rRNA Um2552 methyltransferase</fullName>
    </alternativeName>
    <alternativeName>
        <fullName evidence="1">rRNA (uridine-2'-O-)-methyltransferase</fullName>
    </alternativeName>
</protein>
<accession>Q9PH52</accession>
<keyword id="KW-0963">Cytoplasm</keyword>
<keyword id="KW-0489">Methyltransferase</keyword>
<keyword id="KW-0698">rRNA processing</keyword>
<keyword id="KW-0949">S-adenosyl-L-methionine</keyword>
<keyword id="KW-0808">Transferase</keyword>